<organism>
    <name type="scientific">Pseudomonas aeruginosa (strain ATCC 15692 / DSM 22644 / CIP 104116 / JCM 14847 / LMG 12228 / 1C / PRS 101 / PAO1)</name>
    <dbReference type="NCBI Taxonomy" id="208964"/>
    <lineage>
        <taxon>Bacteria</taxon>
        <taxon>Pseudomonadati</taxon>
        <taxon>Pseudomonadota</taxon>
        <taxon>Gammaproteobacteria</taxon>
        <taxon>Pseudomonadales</taxon>
        <taxon>Pseudomonadaceae</taxon>
        <taxon>Pseudomonas</taxon>
    </lineage>
</organism>
<dbReference type="EC" id="2.3.1.184"/>
<dbReference type="EMBL" id="U11811">
    <property type="protein sequence ID" value="AAA82725.1"/>
    <property type="molecule type" value="Genomic_DNA"/>
</dbReference>
<dbReference type="EMBL" id="U40458">
    <property type="protein sequence ID" value="AAC44037.1"/>
    <property type="molecule type" value="Genomic_DNA"/>
</dbReference>
<dbReference type="EMBL" id="U15644">
    <property type="protein sequence ID" value="AAA89074.1"/>
    <property type="molecule type" value="Genomic_DNA"/>
</dbReference>
<dbReference type="EMBL" id="AE004091">
    <property type="protein sequence ID" value="AAG06864.1"/>
    <property type="molecule type" value="Genomic_DNA"/>
</dbReference>
<dbReference type="PIR" id="A83212">
    <property type="entry name" value="A83212"/>
</dbReference>
<dbReference type="PIR" id="S70173">
    <property type="entry name" value="S70173"/>
</dbReference>
<dbReference type="RefSeq" id="NP_252166.1">
    <property type="nucleotide sequence ID" value="NC_002516.2"/>
</dbReference>
<dbReference type="RefSeq" id="WP_003113896.1">
    <property type="nucleotide sequence ID" value="NZ_QZGE01000039.1"/>
</dbReference>
<dbReference type="SMR" id="P54291"/>
<dbReference type="STRING" id="208964.PA3476"/>
<dbReference type="PaxDb" id="208964-PA3476"/>
<dbReference type="DNASU" id="878967"/>
<dbReference type="GeneID" id="878967"/>
<dbReference type="KEGG" id="pae:PA3476"/>
<dbReference type="PATRIC" id="fig|208964.12.peg.3639"/>
<dbReference type="PseudoCAP" id="PA3476"/>
<dbReference type="HOGENOM" id="CLU_085711_4_0_6"/>
<dbReference type="InParanoid" id="P54291"/>
<dbReference type="OrthoDB" id="6023281at2"/>
<dbReference type="PhylomeDB" id="P54291"/>
<dbReference type="BioCyc" id="MetaCyc:MONOMER-14565"/>
<dbReference type="BioCyc" id="PAER208964:G1FZ6-3544-MONOMER"/>
<dbReference type="BRENDA" id="2.3.1.184">
    <property type="organism ID" value="5087"/>
</dbReference>
<dbReference type="PHI-base" id="PHI:10791"/>
<dbReference type="PHI-base" id="PHI:12085"/>
<dbReference type="PHI-base" id="PHI:6747"/>
<dbReference type="PHI-base" id="PHI:9367"/>
<dbReference type="Proteomes" id="UP000002438">
    <property type="component" value="Chromosome"/>
</dbReference>
<dbReference type="GO" id="GO:0061579">
    <property type="term" value="F:N-acyl homoserine lactone synthase activity"/>
    <property type="evidence" value="ECO:0000304"/>
    <property type="project" value="PHI-base"/>
</dbReference>
<dbReference type="GO" id="GO:0120218">
    <property type="term" value="P:host interaction involved in quorum sensing"/>
    <property type="evidence" value="ECO:0000304"/>
    <property type="project" value="PHI-base"/>
</dbReference>
<dbReference type="GO" id="GO:0007165">
    <property type="term" value="P:signal transduction"/>
    <property type="evidence" value="ECO:0000318"/>
    <property type="project" value="GO_Central"/>
</dbReference>
<dbReference type="Gene3D" id="3.40.630.30">
    <property type="match status" value="1"/>
</dbReference>
<dbReference type="InterPro" id="IPR016181">
    <property type="entry name" value="Acyl_CoA_acyltransferase"/>
</dbReference>
<dbReference type="InterPro" id="IPR018311">
    <property type="entry name" value="Autoind_synth_CS"/>
</dbReference>
<dbReference type="InterPro" id="IPR001690">
    <property type="entry name" value="Autoind_synthase"/>
</dbReference>
<dbReference type="PANTHER" id="PTHR39322">
    <property type="entry name" value="ACYL-HOMOSERINE-LACTONE SYNTHASE"/>
    <property type="match status" value="1"/>
</dbReference>
<dbReference type="PANTHER" id="PTHR39322:SF1">
    <property type="entry name" value="ISOVALERYL-HOMOSERINE LACTONE SYNTHASE"/>
    <property type="match status" value="1"/>
</dbReference>
<dbReference type="Pfam" id="PF00765">
    <property type="entry name" value="Autoind_synth"/>
    <property type="match status" value="1"/>
</dbReference>
<dbReference type="PRINTS" id="PR01549">
    <property type="entry name" value="AUTOINDCRSYN"/>
</dbReference>
<dbReference type="SUPFAM" id="SSF55729">
    <property type="entry name" value="Acyl-CoA N-acyltransferases (Nat)"/>
    <property type="match status" value="1"/>
</dbReference>
<dbReference type="PROSITE" id="PS00949">
    <property type="entry name" value="AUTOINDUCER_SYNTH_1"/>
    <property type="match status" value="1"/>
</dbReference>
<dbReference type="PROSITE" id="PS51187">
    <property type="entry name" value="AUTOINDUCER_SYNTH_2"/>
    <property type="match status" value="1"/>
</dbReference>
<keyword id="KW-0071">Autoinducer synthesis</keyword>
<keyword id="KW-0673">Quorum sensing</keyword>
<keyword id="KW-1185">Reference proteome</keyword>
<keyword id="KW-0949">S-adenosyl-L-methionine</keyword>
<keyword id="KW-0808">Transferase</keyword>
<gene>
    <name type="primary">rhlI</name>
    <name type="synonym">vsmI</name>
    <name type="ordered locus">PA3476</name>
</gene>
<accession>P54291</accession>
<comment type="function">
    <text>Required for the synthesis of BHL (N-butanoyl-L-homoserine lactone), and HHL (N-hexanoyl-L-homoserine lactone) autoinducer molecules which bind to RhlR and thus acts in elastase biosynthesis regulation.</text>
</comment>
<comment type="catalytic activity">
    <reaction>
        <text>a fatty acyl-[ACP] + S-adenosyl-L-methionine = an N-acyl-L-homoserine lactone + S-methyl-5'-thioadenosine + holo-[ACP] + H(+)</text>
        <dbReference type="Rhea" id="RHEA:10096"/>
        <dbReference type="Rhea" id="RHEA-COMP:9685"/>
        <dbReference type="Rhea" id="RHEA-COMP:14125"/>
        <dbReference type="ChEBI" id="CHEBI:15378"/>
        <dbReference type="ChEBI" id="CHEBI:17509"/>
        <dbReference type="ChEBI" id="CHEBI:55474"/>
        <dbReference type="ChEBI" id="CHEBI:59789"/>
        <dbReference type="ChEBI" id="CHEBI:64479"/>
        <dbReference type="ChEBI" id="CHEBI:138651"/>
        <dbReference type="EC" id="2.3.1.184"/>
    </reaction>
</comment>
<comment type="similarity">
    <text evidence="1">Belongs to the autoinducer synthase family.</text>
</comment>
<feature type="chain" id="PRO_0000210894" description="Acyl-homoserine-lactone synthase">
    <location>
        <begin position="1"/>
        <end position="201"/>
    </location>
</feature>
<feature type="sequence conflict" description="In Ref. 3; AAA89074." evidence="2" ref="3">
    <original>L</original>
    <variation>F</variation>
    <location>
        <position position="4"/>
    </location>
</feature>
<feature type="sequence conflict" description="In Ref. 1 and 3." evidence="2" ref="1 3">
    <original>S</original>
    <variation>G</variation>
    <location>
        <position position="62"/>
    </location>
</feature>
<feature type="sequence conflict" description="In Ref. 1 and 3." evidence="2" ref="1 3">
    <original>D</original>
    <variation>E</variation>
    <location>
        <position position="83"/>
    </location>
</feature>
<feature type="sequence conflict" description="In Ref. 2; AAC44037." evidence="2" ref="2">
    <original>QGVPLSMAV</original>
    <variation>AEPR</variation>
    <location>
        <begin position="193"/>
        <end position="201"/>
    </location>
</feature>
<feature type="sequence conflict" description="In Ref. 3; AAA89074." evidence="2" ref="3">
    <original>GVP</original>
    <variation>RT</variation>
    <location>
        <begin position="194"/>
        <end position="196"/>
    </location>
</feature>
<proteinExistence type="inferred from homology"/>
<protein>
    <recommendedName>
        <fullName>Acyl-homoserine-lactone synthase</fullName>
        <ecNumber>2.3.1.184</ecNumber>
    </recommendedName>
    <alternativeName>
        <fullName>Autoinducer synthesis protein RhlI</fullName>
    </alternativeName>
</protein>
<evidence type="ECO:0000255" key="1">
    <source>
        <dbReference type="PROSITE-ProRule" id="PRU00533"/>
    </source>
</evidence>
<evidence type="ECO:0000305" key="2"/>
<reference key="1">
    <citation type="journal article" date="1995" name="Proc. Natl. Acad. Sci. U.S.A.">
        <title>Autoinducer-mediated regulation of rhamnolipid biosurfactant synthesis in Pseudomonas aeruginosa.</title>
        <authorList>
            <person name="Ochsner U.A."/>
            <person name="Reiser J."/>
        </authorList>
    </citation>
    <scope>NUCLEOTIDE SEQUENCE [GENOMIC DNA]</scope>
    <source>
        <strain>DSM 2659 / PG201</strain>
    </source>
</reference>
<reference key="2">
    <citation type="journal article" date="1995" name="J. Bacteriol.">
        <title>Synthesis of multiple exoproducts in Pseudomonas aeruginosa is under the control of RhlR-RhlI, another set of regulators in strain PAO1 with homology to the autoinducer-responsive LuxR-LuxI family.</title>
        <authorList>
            <person name="Brint J.M."/>
            <person name="Ohman D.E."/>
        </authorList>
    </citation>
    <scope>NUCLEOTIDE SEQUENCE [GENOMIC DNA]</scope>
    <source>
        <strain>ATCC 15692 / DSM 22644 / CIP 104116 / JCM 14847 / LMG 12228 / 1C / PRS 101 / PAO1</strain>
    </source>
</reference>
<reference key="3">
    <citation type="journal article" date="1995" name="Mol. Microbiol.">
        <title>Multiple homologues of LuxR and LuxI control expression of virulence determinants and secondary metabolites through quorum sensing in Pseudomonas aeruginosa PAO1.</title>
        <authorList>
            <person name="Latifi A."/>
            <person name="Winson M.K."/>
            <person name="Foglino M."/>
            <person name="Bycroft B.W."/>
            <person name="Stewart G.S.A.B."/>
            <person name="Lazdunski A."/>
            <person name="Williams P."/>
        </authorList>
    </citation>
    <scope>NUCLEOTIDE SEQUENCE [GENOMIC DNA]</scope>
    <source>
        <strain>ATCC 15692 / DSM 22644 / CIP 104116 / JCM 14847 / LMG 12228 / 1C / PRS 101 / PAO1</strain>
    </source>
</reference>
<reference key="4">
    <citation type="journal article" date="2000" name="Nature">
        <title>Complete genome sequence of Pseudomonas aeruginosa PAO1, an opportunistic pathogen.</title>
        <authorList>
            <person name="Stover C.K."/>
            <person name="Pham X.-Q.T."/>
            <person name="Erwin A.L."/>
            <person name="Mizoguchi S.D."/>
            <person name="Warrener P."/>
            <person name="Hickey M.J."/>
            <person name="Brinkman F.S.L."/>
            <person name="Hufnagle W.O."/>
            <person name="Kowalik D.J."/>
            <person name="Lagrou M."/>
            <person name="Garber R.L."/>
            <person name="Goltry L."/>
            <person name="Tolentino E."/>
            <person name="Westbrock-Wadman S."/>
            <person name="Yuan Y."/>
            <person name="Brody L.L."/>
            <person name="Coulter S.N."/>
            <person name="Folger K.R."/>
            <person name="Kas A."/>
            <person name="Larbig K."/>
            <person name="Lim R.M."/>
            <person name="Smith K.A."/>
            <person name="Spencer D.H."/>
            <person name="Wong G.K.-S."/>
            <person name="Wu Z."/>
            <person name="Paulsen I.T."/>
            <person name="Reizer J."/>
            <person name="Saier M.H. Jr."/>
            <person name="Hancock R.E.W."/>
            <person name="Lory S."/>
            <person name="Olson M.V."/>
        </authorList>
    </citation>
    <scope>NUCLEOTIDE SEQUENCE [LARGE SCALE GENOMIC DNA]</scope>
    <source>
        <strain>ATCC 15692 / DSM 22644 / CIP 104116 / JCM 14847 / LMG 12228 / 1C / PRS 101 / PAO1</strain>
    </source>
</reference>
<name>RHLI_PSEAE</name>
<sequence length="201" mass="22630">MIELLSESLEGLSAAMIAELGRYRHQVFIEKLGWDVVSTSRVRDQEFDQFDHPQTRYIVAMSRQGICGCARLLPTTDAYLLKDVFAYLCSETPPSDPSVWELSRYAASAADDPQLAMKIFWSSLQCAWYLGASSVVAVTTTAMERYFVRNGVILQRLGPPQKVKGETLVAISFPAYQERGLEMLLRYHPEWLQGVPLSMAV</sequence>